<accession>P33215</accession>
<accession>Q6NXV3</accession>
<accession>Q8BN12</accession>
<accession>Q8BN86</accession>
<accession>Q8BQL9</accession>
<accession>Q9CWK2</accession>
<dbReference type="EMBL" id="D10712">
    <property type="protein sequence ID" value="BAA01554.1"/>
    <property type="molecule type" value="mRNA"/>
</dbReference>
<dbReference type="EMBL" id="AK048393">
    <property type="protein sequence ID" value="BAC33321.1"/>
    <property type="molecule type" value="mRNA"/>
</dbReference>
<dbReference type="EMBL" id="AK085355">
    <property type="protein sequence ID" value="BAC39429.2"/>
    <property type="molecule type" value="mRNA"/>
</dbReference>
<dbReference type="EMBL" id="AK090040">
    <property type="protein sequence ID" value="BAC41060.1"/>
    <property type="molecule type" value="mRNA"/>
</dbReference>
<dbReference type="EMBL" id="AK010591">
    <property type="protein sequence ID" value="BAB27048.1"/>
    <property type="molecule type" value="mRNA"/>
</dbReference>
<dbReference type="EMBL" id="AK153746">
    <property type="protein sequence ID" value="BAE32166.1"/>
    <property type="molecule type" value="mRNA"/>
</dbReference>
<dbReference type="EMBL" id="BC052430">
    <property type="protein sequence ID" value="AAH52430.1"/>
    <property type="molecule type" value="mRNA"/>
</dbReference>
<dbReference type="EMBL" id="BC066870">
    <property type="protein sequence ID" value="AAH66870.1"/>
    <property type="molecule type" value="mRNA"/>
</dbReference>
<dbReference type="CCDS" id="CCDS24123.1">
    <molecule id="P33215-1"/>
</dbReference>
<dbReference type="PIR" id="I60167">
    <property type="entry name" value="I60167"/>
</dbReference>
<dbReference type="RefSeq" id="NP_032708.2">
    <molecule id="P33215-1"/>
    <property type="nucleotide sequence ID" value="NM_008682.2"/>
</dbReference>
<dbReference type="SMR" id="P33215"/>
<dbReference type="BioGRID" id="201721">
    <property type="interactions" value="116"/>
</dbReference>
<dbReference type="FunCoup" id="P33215">
    <property type="interactions" value="2574"/>
</dbReference>
<dbReference type="IntAct" id="P33215">
    <property type="interactions" value="105"/>
</dbReference>
<dbReference type="MINT" id="P33215"/>
<dbReference type="STRING" id="10090.ENSMUSP00000020163"/>
<dbReference type="GlyGen" id="P33215">
    <property type="glycosylation" value="3 sites, 1 O-linked glycan (3 sites)"/>
</dbReference>
<dbReference type="iPTMnet" id="P33215"/>
<dbReference type="PhosphoSitePlus" id="P33215"/>
<dbReference type="SwissPalm" id="P33215"/>
<dbReference type="jPOST" id="P33215"/>
<dbReference type="PaxDb" id="10090-ENSMUSP00000020163"/>
<dbReference type="PeptideAtlas" id="P33215"/>
<dbReference type="ProteomicsDB" id="253060">
    <molecule id="P33215-1"/>
</dbReference>
<dbReference type="ProteomicsDB" id="253061">
    <molecule id="P33215-2"/>
</dbReference>
<dbReference type="Pumba" id="P33215"/>
<dbReference type="Antibodypedia" id="30194">
    <property type="antibodies" value="222 antibodies from 32 providers"/>
</dbReference>
<dbReference type="Ensembl" id="ENSMUST00000020163.7">
    <molecule id="P33215-1"/>
    <property type="protein sequence ID" value="ENSMUSP00000020163.7"/>
    <property type="gene ID" value="ENSMUSG00000019988.8"/>
</dbReference>
<dbReference type="GeneID" id="17997"/>
<dbReference type="KEGG" id="mmu:17997"/>
<dbReference type="UCSC" id="uc007gud.2">
    <molecule id="P33215-1"/>
    <property type="organism name" value="mouse"/>
</dbReference>
<dbReference type="UCSC" id="uc007gue.2">
    <molecule id="P33215-2"/>
    <property type="organism name" value="mouse"/>
</dbReference>
<dbReference type="AGR" id="MGI:97293"/>
<dbReference type="CTD" id="121441"/>
<dbReference type="MGI" id="MGI:97293">
    <property type="gene designation" value="Nedd1"/>
</dbReference>
<dbReference type="VEuPathDB" id="HostDB:ENSMUSG00000019988"/>
<dbReference type="eggNOG" id="KOG4378">
    <property type="taxonomic scope" value="Eukaryota"/>
</dbReference>
<dbReference type="GeneTree" id="ENSGT00390000001561"/>
<dbReference type="HOGENOM" id="CLU_415014_0_0_1"/>
<dbReference type="InParanoid" id="P33215"/>
<dbReference type="OMA" id="GTMVLWD"/>
<dbReference type="OrthoDB" id="1602884at2759"/>
<dbReference type="PhylomeDB" id="P33215"/>
<dbReference type="TreeFam" id="TF329816"/>
<dbReference type="Reactome" id="R-MMU-2565942">
    <property type="pathway name" value="Regulation of PLK1 Activity at G2/M Transition"/>
</dbReference>
<dbReference type="Reactome" id="R-MMU-380259">
    <property type="pathway name" value="Loss of Nlp from mitotic centrosomes"/>
</dbReference>
<dbReference type="Reactome" id="R-MMU-380270">
    <property type="pathway name" value="Recruitment of mitotic centrosome proteins and complexes"/>
</dbReference>
<dbReference type="Reactome" id="R-MMU-380284">
    <property type="pathway name" value="Loss of proteins required for interphase microtubule organization from the centrosome"/>
</dbReference>
<dbReference type="Reactome" id="R-MMU-380320">
    <property type="pathway name" value="Recruitment of NuMA to mitotic centrosomes"/>
</dbReference>
<dbReference type="Reactome" id="R-MMU-5620912">
    <property type="pathway name" value="Anchoring of the basal body to the plasma membrane"/>
</dbReference>
<dbReference type="Reactome" id="R-MMU-8854518">
    <property type="pathway name" value="AURKA Activation by TPX2"/>
</dbReference>
<dbReference type="BioGRID-ORCS" id="17997">
    <property type="hits" value="25 hits in 81 CRISPR screens"/>
</dbReference>
<dbReference type="CD-CODE" id="01CA17F3">
    <property type="entry name" value="Centrosome"/>
</dbReference>
<dbReference type="CD-CODE" id="DE1E139C">
    <property type="entry name" value="Chromatoid body"/>
</dbReference>
<dbReference type="ChiTaRS" id="Nedd1">
    <property type="organism name" value="mouse"/>
</dbReference>
<dbReference type="PRO" id="PR:P33215"/>
<dbReference type="Proteomes" id="UP000000589">
    <property type="component" value="Chromosome 10"/>
</dbReference>
<dbReference type="RNAct" id="P33215">
    <property type="molecule type" value="protein"/>
</dbReference>
<dbReference type="Bgee" id="ENSMUSG00000019988">
    <property type="expression patterns" value="Expressed in animal zygote and 232 other cell types or tissues"/>
</dbReference>
<dbReference type="ExpressionAtlas" id="P33215">
    <property type="expression patterns" value="baseline and differential"/>
</dbReference>
<dbReference type="GO" id="GO:0045177">
    <property type="term" value="C:apical part of cell"/>
    <property type="evidence" value="ECO:0000314"/>
    <property type="project" value="MGI"/>
</dbReference>
<dbReference type="GO" id="GO:0005814">
    <property type="term" value="C:centriole"/>
    <property type="evidence" value="ECO:0000314"/>
    <property type="project" value="MGI"/>
</dbReference>
<dbReference type="GO" id="GO:0005813">
    <property type="term" value="C:centrosome"/>
    <property type="evidence" value="ECO:0000314"/>
    <property type="project" value="MGI"/>
</dbReference>
<dbReference type="GO" id="GO:0036064">
    <property type="term" value="C:ciliary basal body"/>
    <property type="evidence" value="ECO:0000314"/>
    <property type="project" value="MGI"/>
</dbReference>
<dbReference type="GO" id="GO:0005737">
    <property type="term" value="C:cytoplasm"/>
    <property type="evidence" value="ECO:0000314"/>
    <property type="project" value="MGI"/>
</dbReference>
<dbReference type="GO" id="GO:0005829">
    <property type="term" value="C:cytosol"/>
    <property type="evidence" value="ECO:0007669"/>
    <property type="project" value="Ensembl"/>
</dbReference>
<dbReference type="GO" id="GO:0001650">
    <property type="term" value="C:fibrillar center"/>
    <property type="evidence" value="ECO:0007669"/>
    <property type="project" value="Ensembl"/>
</dbReference>
<dbReference type="GO" id="GO:0000931">
    <property type="term" value="C:gamma-tubulin ring complex"/>
    <property type="evidence" value="ECO:0000266"/>
    <property type="project" value="MGI"/>
</dbReference>
<dbReference type="GO" id="GO:0005654">
    <property type="term" value="C:nucleoplasm"/>
    <property type="evidence" value="ECO:0007669"/>
    <property type="project" value="Ensembl"/>
</dbReference>
<dbReference type="GO" id="GO:0000242">
    <property type="term" value="C:pericentriolar material"/>
    <property type="evidence" value="ECO:0000314"/>
    <property type="project" value="MGI"/>
</dbReference>
<dbReference type="GO" id="GO:0000922">
    <property type="term" value="C:spindle pole"/>
    <property type="evidence" value="ECO:0000314"/>
    <property type="project" value="MGI"/>
</dbReference>
<dbReference type="GO" id="GO:0051301">
    <property type="term" value="P:cell division"/>
    <property type="evidence" value="ECO:0007669"/>
    <property type="project" value="UniProtKB-KW"/>
</dbReference>
<dbReference type="GO" id="GO:0007019">
    <property type="term" value="P:microtubule depolymerization"/>
    <property type="evidence" value="ECO:0000266"/>
    <property type="project" value="MGI"/>
</dbReference>
<dbReference type="GO" id="GO:0031109">
    <property type="term" value="P:microtubule polymerization or depolymerization"/>
    <property type="evidence" value="ECO:0000266"/>
    <property type="project" value="MGI"/>
</dbReference>
<dbReference type="GO" id="GO:0070201">
    <property type="term" value="P:regulation of establishment of protein localization"/>
    <property type="evidence" value="ECO:0000266"/>
    <property type="project" value="MGI"/>
</dbReference>
<dbReference type="CDD" id="cd00200">
    <property type="entry name" value="WD40"/>
    <property type="match status" value="1"/>
</dbReference>
<dbReference type="FunFam" id="2.130.10.10:FF:000284">
    <property type="entry name" value="protein NEDD1 isoform X1"/>
    <property type="match status" value="1"/>
</dbReference>
<dbReference type="FunFam" id="2.130.10.10:FF:000302">
    <property type="entry name" value="protein NEDD1 isoform X2"/>
    <property type="match status" value="1"/>
</dbReference>
<dbReference type="Gene3D" id="2.130.10.10">
    <property type="entry name" value="YVTN repeat-like/Quinoprotein amine dehydrogenase"/>
    <property type="match status" value="2"/>
</dbReference>
<dbReference type="InterPro" id="IPR052818">
    <property type="entry name" value="NEDD1_Spindle_Assembly"/>
</dbReference>
<dbReference type="InterPro" id="IPR015943">
    <property type="entry name" value="WD40/YVTN_repeat-like_dom_sf"/>
</dbReference>
<dbReference type="InterPro" id="IPR019775">
    <property type="entry name" value="WD40_repeat_CS"/>
</dbReference>
<dbReference type="InterPro" id="IPR036322">
    <property type="entry name" value="WD40_repeat_dom_sf"/>
</dbReference>
<dbReference type="InterPro" id="IPR001680">
    <property type="entry name" value="WD40_rpt"/>
</dbReference>
<dbReference type="PANTHER" id="PTHR44414">
    <property type="entry name" value="PROTEIN NEDD1"/>
    <property type="match status" value="1"/>
</dbReference>
<dbReference type="PANTHER" id="PTHR44414:SF1">
    <property type="entry name" value="PROTEIN NEDD1"/>
    <property type="match status" value="1"/>
</dbReference>
<dbReference type="Pfam" id="PF00400">
    <property type="entry name" value="WD40"/>
    <property type="match status" value="4"/>
</dbReference>
<dbReference type="SMART" id="SM00320">
    <property type="entry name" value="WD40"/>
    <property type="match status" value="6"/>
</dbReference>
<dbReference type="SUPFAM" id="SSF50978">
    <property type="entry name" value="WD40 repeat-like"/>
    <property type="match status" value="1"/>
</dbReference>
<dbReference type="PROSITE" id="PS00678">
    <property type="entry name" value="WD_REPEATS_1"/>
    <property type="match status" value="2"/>
</dbReference>
<dbReference type="PROSITE" id="PS50082">
    <property type="entry name" value="WD_REPEATS_2"/>
    <property type="match status" value="1"/>
</dbReference>
<dbReference type="PROSITE" id="PS50294">
    <property type="entry name" value="WD_REPEATS_REGION"/>
    <property type="match status" value="1"/>
</dbReference>
<sequence>MQENLRFASSGDDVKIWDASFLTLVDKFNPHTSPHGISSICWSSNNNFLVTASSSGDKIVVSSCKCKPVPLLELAEGQKQTCVDLNSTSMYLASGGLNNTVNIWDLKSKRLHRSLKDHKCEVTCVAYNWNDCYIASGSLSGEIILHSVTTNTSSTPFGHGSKQPIRHIKYSLFRKSLLGSVSDNGVVTLWDVNSQSSYHTFDSTHKAPASGICFSPVNELLFVTIGLDKRIILYDTSSKKLVKTLVADTPLTAVDFMPDGATLAIGSSRGKIYQYDLRMLKSPVKTISAHKTSVQCIAFQYSTSLTKASLSKGSSNKATAVNKRSVPVSSSSGAAQNSGIVREAPSPSIATVLPQPVTTALGKGSGAAQDEAGLARSKSTDIFSKETDAGKSQDFSSFDDTGKNSLGDMFSPIRDDAVVSKGGDESIGKGDGLDFLPQLNSVFPLRKNAGASSSLVLHSSPLNVLMGSSGKEENESHEPSAESKRAYLGKQEPKDAMKQFTKLISSGAEPGILNTCPSSNQARNLEKFEKPEKDIEAQLIHEPSVNGSSTTVPKAASSVTAGVASSLSEKIVDTLGNSRPGAPLTSVQIRFIQNMIQETLDDFREACHRDIVNLQVEMIKQFHIQLNEMHSLLERYSVNEGLVAEIERLREENKRLRAHF</sequence>
<evidence type="ECO:0000250" key="1">
    <source>
        <dbReference type="UniProtKB" id="Q8NHV4"/>
    </source>
</evidence>
<evidence type="ECO:0000269" key="2">
    <source>
    </source>
</evidence>
<evidence type="ECO:0000303" key="3">
    <source>
    </source>
</evidence>
<evidence type="ECO:0000305" key="4"/>
<evidence type="ECO:0007744" key="5">
    <source>
    </source>
</evidence>
<keyword id="KW-0025">Alternative splicing</keyword>
<keyword id="KW-0131">Cell cycle</keyword>
<keyword id="KW-0132">Cell division</keyword>
<keyword id="KW-0963">Cytoplasm</keyword>
<keyword id="KW-0206">Cytoskeleton</keyword>
<keyword id="KW-0498">Mitosis</keyword>
<keyword id="KW-0597">Phosphoprotein</keyword>
<keyword id="KW-1185">Reference proteome</keyword>
<keyword id="KW-0677">Repeat</keyword>
<keyword id="KW-0853">WD repeat</keyword>
<protein>
    <recommendedName>
        <fullName>Protein NEDD1</fullName>
    </recommendedName>
    <alternativeName>
        <fullName>Neural precursor cell expressed developmentally down-regulated protein 1</fullName>
        <shortName>NEDD-1</shortName>
    </alternativeName>
</protein>
<comment type="function">
    <text evidence="1 2">Required for mitosis progression. Promotes the nucleation of microtubules from the spindle (By similarity). May play an important role during the embryonic development and differentiation of the central nervous system (PubMed:1378265).</text>
</comment>
<comment type="subunit">
    <text evidence="1">Interacts with FAM29A. Interacts with HSPA1A and HSPA1B. Interacts with gamma-tubulin in a HSPA1A/B-dependent manner.</text>
</comment>
<comment type="subcellular location">
    <subcellularLocation>
        <location evidence="1">Cytoplasm</location>
        <location evidence="1">Cytoskeleton</location>
        <location evidence="1">Microtubule organizing center</location>
        <location evidence="1">Centrosome</location>
    </subcellularLocation>
</comment>
<comment type="alternative products">
    <event type="alternative splicing"/>
    <isoform>
        <id>P33215-1</id>
        <name>1</name>
        <sequence type="displayed"/>
    </isoform>
    <isoform>
        <id>P33215-2</id>
        <name>2</name>
        <sequence type="described" ref="VSP_016263 VSP_016264"/>
    </isoform>
</comment>
<comment type="developmental stage">
    <text>Down-regulated during the development of brain.</text>
</comment>
<comment type="PTM">
    <text evidence="1">During mitosis, prior phosphorylation on Thr-550 by CDK1 promotes subsequent phosphorylation by PLK1 on Ser-397, Ser-426 and Ser-637. Phosphorylated NEDD1 can interact with gamma-tubulin for targeting the gamma-tubulin ring complex (gTuRC) to the centrosome, an important step for spindle formation.</text>
</comment>
<comment type="miscellaneous">
    <molecule>Isoform 2</molecule>
    <text evidence="4">May be due to intron retention.</text>
</comment>
<organism>
    <name type="scientific">Mus musculus</name>
    <name type="common">Mouse</name>
    <dbReference type="NCBI Taxonomy" id="10090"/>
    <lineage>
        <taxon>Eukaryota</taxon>
        <taxon>Metazoa</taxon>
        <taxon>Chordata</taxon>
        <taxon>Craniata</taxon>
        <taxon>Vertebrata</taxon>
        <taxon>Euteleostomi</taxon>
        <taxon>Mammalia</taxon>
        <taxon>Eutheria</taxon>
        <taxon>Euarchontoglires</taxon>
        <taxon>Glires</taxon>
        <taxon>Rodentia</taxon>
        <taxon>Myomorpha</taxon>
        <taxon>Muroidea</taxon>
        <taxon>Muridae</taxon>
        <taxon>Murinae</taxon>
        <taxon>Mus</taxon>
        <taxon>Mus</taxon>
    </lineage>
</organism>
<proteinExistence type="evidence at protein level"/>
<feature type="chain" id="PRO_0000051096" description="Protein NEDD1">
    <location>
        <begin position="1"/>
        <end position="660"/>
    </location>
</feature>
<feature type="repeat" description="WD 1">
    <location>
        <begin position="1"/>
        <end position="31"/>
    </location>
</feature>
<feature type="repeat" description="WD 2">
    <location>
        <begin position="32"/>
        <end position="71"/>
    </location>
</feature>
<feature type="repeat" description="WD 3">
    <location>
        <begin position="75"/>
        <end position="114"/>
    </location>
</feature>
<feature type="repeat" description="WD 4">
    <location>
        <begin position="117"/>
        <end position="156"/>
    </location>
</feature>
<feature type="repeat" description="WD 5">
    <location>
        <begin position="160"/>
        <end position="200"/>
    </location>
</feature>
<feature type="repeat" description="WD 6">
    <location>
        <begin position="204"/>
        <end position="244"/>
    </location>
</feature>
<feature type="repeat" description="WD 7">
    <location>
        <begin position="246"/>
        <end position="285"/>
    </location>
</feature>
<feature type="repeat" description="WD 8">
    <location>
        <begin position="289"/>
        <end position="332"/>
    </location>
</feature>
<feature type="modified residue" description="Phosphoserine" evidence="1">
    <location>
        <position position="325"/>
    </location>
</feature>
<feature type="modified residue" description="Phosphoserine" evidence="5">
    <location>
        <position position="379"/>
    </location>
</feature>
<feature type="modified residue" description="Phosphoserine; by PLK1" evidence="1">
    <location>
        <position position="397"/>
    </location>
</feature>
<feature type="modified residue" description="Phosphoserine" evidence="5">
    <location>
        <position position="411"/>
    </location>
</feature>
<feature type="modified residue" description="Phosphoserine; by PLK1" evidence="1">
    <location>
        <position position="426"/>
    </location>
</feature>
<feature type="modified residue" description="Phosphoserine" evidence="1">
    <location>
        <position position="468"/>
    </location>
</feature>
<feature type="modified residue" description="Phosphothreonine; by CDK1" evidence="1">
    <location>
        <position position="550"/>
    </location>
</feature>
<feature type="modified residue" description="Phosphoserine; by PLK1" evidence="1">
    <location>
        <position position="637"/>
    </location>
</feature>
<feature type="splice variant" id="VSP_016263" description="In isoform 2." evidence="3">
    <original>FTKLISSGA</original>
    <variation>VSPRKEYPV</variation>
    <location>
        <begin position="500"/>
        <end position="508"/>
    </location>
</feature>
<feature type="splice variant" id="VSP_016264" description="In isoform 2." evidence="3">
    <location>
        <begin position="509"/>
        <end position="660"/>
    </location>
</feature>
<feature type="sequence conflict" description="In Ref. 3; AAH66870." evidence="4" ref="3">
    <original>D</original>
    <variation>G</variation>
    <location>
        <position position="13"/>
    </location>
</feature>
<feature type="sequence conflict" description="In Ref. 2; BAC41060." evidence="4" ref="2">
    <original>V</original>
    <variation>E</variation>
    <location>
        <position position="187"/>
    </location>
</feature>
<feature type="sequence conflict" description="In Ref. 2; BAC33321." evidence="4" ref="2">
    <original>D</original>
    <variation>G</variation>
    <location>
        <position position="370"/>
    </location>
</feature>
<feature type="sequence conflict" description="In Ref. 1; BAA01554 and 2; BAC41060." evidence="4" ref="1 2">
    <original>P</original>
    <variation>L</variation>
    <location>
        <position position="479"/>
    </location>
</feature>
<name>NEDD1_MOUSE</name>
<gene>
    <name type="primary">Nedd1</name>
    <name type="synonym">Nedd-1</name>
</gene>
<reference key="1">
    <citation type="journal article" date="1992" name="Biochem. Biophys. Res. Commun.">
        <title>Identification of a set of genes with developmentally down-regulated expression in the mouse brain.</title>
        <authorList>
            <person name="Kumar S."/>
            <person name="Tomooka Y."/>
            <person name="Noda M."/>
        </authorList>
    </citation>
    <scope>NUCLEOTIDE SEQUENCE [MRNA] (ISOFORM 1)</scope>
    <scope>FUNCTION</scope>
    <source>
        <tissue>Brain</tissue>
    </source>
</reference>
<reference key="2">
    <citation type="journal article" date="2005" name="Science">
        <title>The transcriptional landscape of the mammalian genome.</title>
        <authorList>
            <person name="Carninci P."/>
            <person name="Kasukawa T."/>
            <person name="Katayama S."/>
            <person name="Gough J."/>
            <person name="Frith M.C."/>
            <person name="Maeda N."/>
            <person name="Oyama R."/>
            <person name="Ravasi T."/>
            <person name="Lenhard B."/>
            <person name="Wells C."/>
            <person name="Kodzius R."/>
            <person name="Shimokawa K."/>
            <person name="Bajic V.B."/>
            <person name="Brenner S.E."/>
            <person name="Batalov S."/>
            <person name="Forrest A.R."/>
            <person name="Zavolan M."/>
            <person name="Davis M.J."/>
            <person name="Wilming L.G."/>
            <person name="Aidinis V."/>
            <person name="Allen J.E."/>
            <person name="Ambesi-Impiombato A."/>
            <person name="Apweiler R."/>
            <person name="Aturaliya R.N."/>
            <person name="Bailey T.L."/>
            <person name="Bansal M."/>
            <person name="Baxter L."/>
            <person name="Beisel K.W."/>
            <person name="Bersano T."/>
            <person name="Bono H."/>
            <person name="Chalk A.M."/>
            <person name="Chiu K.P."/>
            <person name="Choudhary V."/>
            <person name="Christoffels A."/>
            <person name="Clutterbuck D.R."/>
            <person name="Crowe M.L."/>
            <person name="Dalla E."/>
            <person name="Dalrymple B.P."/>
            <person name="de Bono B."/>
            <person name="Della Gatta G."/>
            <person name="di Bernardo D."/>
            <person name="Down T."/>
            <person name="Engstrom P."/>
            <person name="Fagiolini M."/>
            <person name="Faulkner G."/>
            <person name="Fletcher C.F."/>
            <person name="Fukushima T."/>
            <person name="Furuno M."/>
            <person name="Futaki S."/>
            <person name="Gariboldi M."/>
            <person name="Georgii-Hemming P."/>
            <person name="Gingeras T.R."/>
            <person name="Gojobori T."/>
            <person name="Green R.E."/>
            <person name="Gustincich S."/>
            <person name="Harbers M."/>
            <person name="Hayashi Y."/>
            <person name="Hensch T.K."/>
            <person name="Hirokawa N."/>
            <person name="Hill D."/>
            <person name="Huminiecki L."/>
            <person name="Iacono M."/>
            <person name="Ikeo K."/>
            <person name="Iwama A."/>
            <person name="Ishikawa T."/>
            <person name="Jakt M."/>
            <person name="Kanapin A."/>
            <person name="Katoh M."/>
            <person name="Kawasawa Y."/>
            <person name="Kelso J."/>
            <person name="Kitamura H."/>
            <person name="Kitano H."/>
            <person name="Kollias G."/>
            <person name="Krishnan S.P."/>
            <person name="Kruger A."/>
            <person name="Kummerfeld S.K."/>
            <person name="Kurochkin I.V."/>
            <person name="Lareau L.F."/>
            <person name="Lazarevic D."/>
            <person name="Lipovich L."/>
            <person name="Liu J."/>
            <person name="Liuni S."/>
            <person name="McWilliam S."/>
            <person name="Madan Babu M."/>
            <person name="Madera M."/>
            <person name="Marchionni L."/>
            <person name="Matsuda H."/>
            <person name="Matsuzawa S."/>
            <person name="Miki H."/>
            <person name="Mignone F."/>
            <person name="Miyake S."/>
            <person name="Morris K."/>
            <person name="Mottagui-Tabar S."/>
            <person name="Mulder N."/>
            <person name="Nakano N."/>
            <person name="Nakauchi H."/>
            <person name="Ng P."/>
            <person name="Nilsson R."/>
            <person name="Nishiguchi S."/>
            <person name="Nishikawa S."/>
            <person name="Nori F."/>
            <person name="Ohara O."/>
            <person name="Okazaki Y."/>
            <person name="Orlando V."/>
            <person name="Pang K.C."/>
            <person name="Pavan W.J."/>
            <person name="Pavesi G."/>
            <person name="Pesole G."/>
            <person name="Petrovsky N."/>
            <person name="Piazza S."/>
            <person name="Reed J."/>
            <person name="Reid J.F."/>
            <person name="Ring B.Z."/>
            <person name="Ringwald M."/>
            <person name="Rost B."/>
            <person name="Ruan Y."/>
            <person name="Salzberg S.L."/>
            <person name="Sandelin A."/>
            <person name="Schneider C."/>
            <person name="Schoenbach C."/>
            <person name="Sekiguchi K."/>
            <person name="Semple C.A."/>
            <person name="Seno S."/>
            <person name="Sessa L."/>
            <person name="Sheng Y."/>
            <person name="Shibata Y."/>
            <person name="Shimada H."/>
            <person name="Shimada K."/>
            <person name="Silva D."/>
            <person name="Sinclair B."/>
            <person name="Sperling S."/>
            <person name="Stupka E."/>
            <person name="Sugiura K."/>
            <person name="Sultana R."/>
            <person name="Takenaka Y."/>
            <person name="Taki K."/>
            <person name="Tammoja K."/>
            <person name="Tan S.L."/>
            <person name="Tang S."/>
            <person name="Taylor M.S."/>
            <person name="Tegner J."/>
            <person name="Teichmann S.A."/>
            <person name="Ueda H.R."/>
            <person name="van Nimwegen E."/>
            <person name="Verardo R."/>
            <person name="Wei C.L."/>
            <person name="Yagi K."/>
            <person name="Yamanishi H."/>
            <person name="Zabarovsky E."/>
            <person name="Zhu S."/>
            <person name="Zimmer A."/>
            <person name="Hide W."/>
            <person name="Bult C."/>
            <person name="Grimmond S.M."/>
            <person name="Teasdale R.D."/>
            <person name="Liu E.T."/>
            <person name="Brusic V."/>
            <person name="Quackenbush J."/>
            <person name="Wahlestedt C."/>
            <person name="Mattick J.S."/>
            <person name="Hume D.A."/>
            <person name="Kai C."/>
            <person name="Sasaki D."/>
            <person name="Tomaru Y."/>
            <person name="Fukuda S."/>
            <person name="Kanamori-Katayama M."/>
            <person name="Suzuki M."/>
            <person name="Aoki J."/>
            <person name="Arakawa T."/>
            <person name="Iida J."/>
            <person name="Imamura K."/>
            <person name="Itoh M."/>
            <person name="Kato T."/>
            <person name="Kawaji H."/>
            <person name="Kawagashira N."/>
            <person name="Kawashima T."/>
            <person name="Kojima M."/>
            <person name="Kondo S."/>
            <person name="Konno H."/>
            <person name="Nakano K."/>
            <person name="Ninomiya N."/>
            <person name="Nishio T."/>
            <person name="Okada M."/>
            <person name="Plessy C."/>
            <person name="Shibata K."/>
            <person name="Shiraki T."/>
            <person name="Suzuki S."/>
            <person name="Tagami M."/>
            <person name="Waki K."/>
            <person name="Watahiki A."/>
            <person name="Okamura-Oho Y."/>
            <person name="Suzuki H."/>
            <person name="Kawai J."/>
            <person name="Hayashizaki Y."/>
        </authorList>
    </citation>
    <scope>NUCLEOTIDE SEQUENCE [LARGE SCALE MRNA] (ISOFORMS 1 AND 2)</scope>
    <source>
        <strain>C57BL/6J</strain>
        <tissue>Head</tissue>
        <tissue>Kidney</tissue>
    </source>
</reference>
<reference key="3">
    <citation type="journal article" date="2004" name="Genome Res.">
        <title>The status, quality, and expansion of the NIH full-length cDNA project: the Mammalian Gene Collection (MGC).</title>
        <authorList>
            <consortium name="The MGC Project Team"/>
        </authorList>
    </citation>
    <scope>NUCLEOTIDE SEQUENCE [LARGE SCALE MRNA] (ISOFORM 1)</scope>
    <source>
        <strain>C57BL/6J</strain>
        <tissue>Brain</tissue>
        <tissue>Egg</tissue>
    </source>
</reference>
<reference key="4">
    <citation type="journal article" date="2009" name="Immunity">
        <title>The phagosomal proteome in interferon-gamma-activated macrophages.</title>
        <authorList>
            <person name="Trost M."/>
            <person name="English L."/>
            <person name="Lemieux S."/>
            <person name="Courcelles M."/>
            <person name="Desjardins M."/>
            <person name="Thibault P."/>
        </authorList>
    </citation>
    <scope>IDENTIFICATION BY MASS SPECTROMETRY [LARGE SCALE ANALYSIS]</scope>
</reference>
<reference key="5">
    <citation type="journal article" date="2010" name="Cell">
        <title>A tissue-specific atlas of mouse protein phosphorylation and expression.</title>
        <authorList>
            <person name="Huttlin E.L."/>
            <person name="Jedrychowski M.P."/>
            <person name="Elias J.E."/>
            <person name="Goswami T."/>
            <person name="Rad R."/>
            <person name="Beausoleil S.A."/>
            <person name="Villen J."/>
            <person name="Haas W."/>
            <person name="Sowa M.E."/>
            <person name="Gygi S.P."/>
        </authorList>
    </citation>
    <scope>PHOSPHORYLATION [LARGE SCALE ANALYSIS] AT SER-379 AND SER-411</scope>
    <scope>IDENTIFICATION BY MASS SPECTROMETRY [LARGE SCALE ANALYSIS]</scope>
    <source>
        <tissue>Kidney</tissue>
        <tissue>Lung</tissue>
        <tissue>Spleen</tissue>
    </source>
</reference>